<reference key="1">
    <citation type="journal article" date="1992" name="Biotechnology (N.Y.)">
        <title>Saccharomyces cerevisiae cells secreting an Aspergillus niger beta-galactosidase grow on whey permeate.</title>
        <authorList>
            <person name="Kumar V."/>
            <person name="Ramakrishnan S."/>
            <person name="Teeri T.T."/>
            <person name="Knowles J.K."/>
            <person name="Hartley B.S."/>
        </authorList>
    </citation>
    <scope>NUCLEOTIDE SEQUENCE [GENOMIC DNA / MRNA]</scope>
    <source>
        <strain>VTT D-80144</strain>
    </source>
</reference>
<reference key="2">
    <citation type="patent" date="1990-09-20" number="WO9010703">
        <title>DNA construct and modified yeast.</title>
        <authorList>
            <person name="Hartley B.S."/>
            <person name="Ramakrishnan S."/>
            <person name="Kumar V."/>
        </authorList>
    </citation>
    <scope>NUCLEOTIDE SEQUENCE [GENOMIC DNA]</scope>
    <scope>PHARMACEUTICAL USE</scope>
    <source>
        <strain>VTT D-80144</strain>
    </source>
</reference>
<gene>
    <name type="primary">lacA</name>
</gene>
<sequence>MKLSSACAIALLAAQAAGASIKHRINGFTLTEHSDPAKRELLQKYVTWDDKSLFINGERIMIFSGEFHPFRLPVKELQLDIFQKVKALGFNCVSFYVDWALVEGKPGEYRADGIFDLEPFFDAASEAGIYLLARPGPYINAESSGGGFPGWLQRVNGTLRSSDKAYLDATDNYVSHVAATIAKYQITNGGPIILYQPENEYTSGCSGVEFPDPVYMQYVEDQARNAGVVIPLINNDASASGNNAPGTGKGAVDIYGHDSYPLGFDCANPTVWPSGDLPTNFRTLHLEQSPTTPYAIVEFQGGSYDPWGGPGFAACSELLNNEFERVFYKNDFSFQIAIMNLYMIFGGTNWGNLGYPNGYTSYDYGSAVTESRNITREKYSELKLLGNFAKVSPGYLTASPGNLTTSGYADTTDLTVTPLLGNSTGSFFVVRHSDYSSEESTSYKLRLPTSAGSVTIPQLGGTLTLNGRDSKIHVTDHNVSGTNIIYSTAEVFTWKKFADGKVLVLYGGAGEHHELAISTKSNVTVIEGSESGISSKQTSSSVVVGWDVSTTRRIIQVGDLKILLLDRNSAYNYWVPQLATDGTSPGFSTPEKVASSIIVKAGYLVRTAYLKGSGLYLTADFNATTSVEVIGVPSTAKNLFINGDKTSHTVDKNGIWSATVDYNAPDISLPSLKDLDWKYVDTLPEIQSSYDDSLWPAADLKQTKNTLRSLTTPTSLYSSDYGFHTGYLLYRGHFTATGNESTFAIDTQGGSAFGSSVWLNGTYLGSWTGLYANSDYNATYNLPQLQAGKTYVITVVIDNMGLEENWTVGEDLMKSPRGISTSCLPDGQAAPISWKLTGNLGGEDYEDKVRGPLNEGGLYAERQGFHQPEPPSQNWKSSSPLEGLSEAGIGFYSASFDLDLPKDGMSHCSSTSVTALRHPRTACRSTSTDIVCEIHKQHRTSDQLPCPRGNPELSRNELVGGDPVALDSAGGKLESLELSYTTPVLTALGEVESVDQPKYKKRKGAY</sequence>
<comment type="function">
    <text>Cleaves beta-linked terminal galactosyl residues from gangliosides, glycoproteins, and glycosaminoglycans.</text>
</comment>
<comment type="catalytic activity">
    <reaction>
        <text>Hydrolysis of terminal non-reducing beta-D-galactose residues in beta-D-galactosides.</text>
        <dbReference type="EC" id="3.2.1.23"/>
    </reaction>
</comment>
<comment type="pharmaceutical">
    <text>Capable of effecting hydrolysis of lactose in situ in the gastrointestinal tract of lactase-deficient subjects when given as replacement therapy at mealtime.</text>
</comment>
<comment type="similarity">
    <text evidence="2">Belongs to the glycosyl hydrolase 35 family.</text>
</comment>
<evidence type="ECO:0000255" key="1"/>
<evidence type="ECO:0000305" key="2"/>
<keyword id="KW-0325">Glycoprotein</keyword>
<keyword id="KW-0326">Glycosidase</keyword>
<keyword id="KW-0378">Hydrolase</keyword>
<keyword id="KW-0582">Pharmaceutical</keyword>
<keyword id="KW-0732">Signal</keyword>
<accession>P29853</accession>
<proteinExistence type="evidence at protein level"/>
<feature type="signal peptide" evidence="1">
    <location>
        <begin position="1"/>
        <end position="19"/>
    </location>
</feature>
<feature type="chain" id="PRO_0000012192" description="Beta-galactosidase">
    <location>
        <begin position="20"/>
        <end position="1006"/>
    </location>
</feature>
<feature type="active site" description="Proton donor" evidence="1">
    <location>
        <position position="200"/>
    </location>
</feature>
<feature type="active site" description="Nucleophile" evidence="1">
    <location>
        <position position="298"/>
    </location>
</feature>
<feature type="glycosylation site" description="N-linked (GlcNAc...) asparagine" evidence="1">
    <location>
        <position position="156"/>
    </location>
</feature>
<feature type="glycosylation site" description="N-linked (GlcNAc...) asparagine" evidence="1">
    <location>
        <position position="373"/>
    </location>
</feature>
<feature type="glycosylation site" description="N-linked (GlcNAc...) asparagine" evidence="1">
    <location>
        <position position="402"/>
    </location>
</feature>
<feature type="glycosylation site" description="N-linked (GlcNAc...) asparagine" evidence="1">
    <location>
        <position position="422"/>
    </location>
</feature>
<feature type="glycosylation site" description="N-linked (GlcNAc...) asparagine" evidence="1">
    <location>
        <position position="478"/>
    </location>
</feature>
<feature type="glycosylation site" description="N-linked (GlcNAc...) asparagine" evidence="1">
    <location>
        <position position="522"/>
    </location>
</feature>
<feature type="glycosylation site" description="N-linked (GlcNAc...) asparagine" evidence="1">
    <location>
        <position position="622"/>
    </location>
</feature>
<feature type="glycosylation site" description="N-linked (GlcNAc...) asparagine" evidence="1">
    <location>
        <position position="739"/>
    </location>
</feature>
<feature type="glycosylation site" description="N-linked (GlcNAc...) asparagine" evidence="1">
    <location>
        <position position="760"/>
    </location>
</feature>
<feature type="glycosylation site" description="N-linked (GlcNAc...) asparagine" evidence="1">
    <location>
        <position position="777"/>
    </location>
</feature>
<feature type="glycosylation site" description="N-linked (GlcNAc...) asparagine" evidence="1">
    <location>
        <position position="805"/>
    </location>
</feature>
<feature type="sequence conflict" description="In Ref. 2; CAA00105." evidence="2" ref="2">
    <original>S</original>
    <variation>C</variation>
    <location>
        <position position="206"/>
    </location>
</feature>
<organism>
    <name type="scientific">Aspergillus niger</name>
    <dbReference type="NCBI Taxonomy" id="5061"/>
    <lineage>
        <taxon>Eukaryota</taxon>
        <taxon>Fungi</taxon>
        <taxon>Dikarya</taxon>
        <taxon>Ascomycota</taxon>
        <taxon>Pezizomycotina</taxon>
        <taxon>Eurotiomycetes</taxon>
        <taxon>Eurotiomycetidae</taxon>
        <taxon>Eurotiales</taxon>
        <taxon>Aspergillaceae</taxon>
        <taxon>Aspergillus</taxon>
        <taxon>Aspergillus subgen. Circumdati</taxon>
    </lineage>
</organism>
<dbReference type="EC" id="3.2.1.23"/>
<dbReference type="EMBL" id="L06037">
    <property type="protein sequence ID" value="AAA32696.1"/>
    <property type="molecule type" value="Genomic_DNA"/>
</dbReference>
<dbReference type="EMBL" id="S37150">
    <property type="protein sequence ID" value="AAC60538.1"/>
    <property type="molecule type" value="mRNA"/>
</dbReference>
<dbReference type="EMBL" id="A00968">
    <property type="protein sequence ID" value="CAA00105.1"/>
    <property type="molecule type" value="Unassigned_DNA"/>
</dbReference>
<dbReference type="PIR" id="T31685">
    <property type="entry name" value="T31685"/>
</dbReference>
<dbReference type="SMR" id="P29853"/>
<dbReference type="BindingDB" id="P29853"/>
<dbReference type="ChEMBL" id="CHEMBL4753"/>
<dbReference type="CAZy" id="GH35">
    <property type="family name" value="Glycoside Hydrolase Family 35"/>
</dbReference>
<dbReference type="GlyCosmos" id="P29853">
    <property type="glycosylation" value="11 sites, No reported glycans"/>
</dbReference>
<dbReference type="PaxDb" id="5061-CADANGAP00001173"/>
<dbReference type="VEuPathDB" id="FungiDB:An01g12150"/>
<dbReference type="VEuPathDB" id="FungiDB:ASPNIDRAFT2_1162768"/>
<dbReference type="VEuPathDB" id="FungiDB:ATCC64974_13640"/>
<dbReference type="VEuPathDB" id="FungiDB:M747DRAFT_325279"/>
<dbReference type="eggNOG" id="KOG0496">
    <property type="taxonomic scope" value="Eukaryota"/>
</dbReference>
<dbReference type="BioCyc" id="MetaCyc:MONOMER-16612"/>
<dbReference type="BRENDA" id="3.2.1.23">
    <property type="organism ID" value="518"/>
</dbReference>
<dbReference type="GO" id="GO:0004565">
    <property type="term" value="F:beta-galactosidase activity"/>
    <property type="evidence" value="ECO:0007669"/>
    <property type="project" value="UniProtKB-EC"/>
</dbReference>
<dbReference type="GO" id="GO:0005975">
    <property type="term" value="P:carbohydrate metabolic process"/>
    <property type="evidence" value="ECO:0007669"/>
    <property type="project" value="InterPro"/>
</dbReference>
<dbReference type="FunFam" id="2.102.20.10:FF:000001">
    <property type="entry name" value="Beta-galactosidase A"/>
    <property type="match status" value="1"/>
</dbReference>
<dbReference type="FunFam" id="2.60.120.260:FF:000065">
    <property type="entry name" value="Beta-galactosidase A"/>
    <property type="match status" value="1"/>
</dbReference>
<dbReference type="FunFam" id="2.60.390.10:FF:000001">
    <property type="entry name" value="Beta-galactosidase A"/>
    <property type="match status" value="1"/>
</dbReference>
<dbReference type="FunFam" id="3.20.20.80:FF:000040">
    <property type="entry name" value="Beta-galactosidase A"/>
    <property type="match status" value="1"/>
</dbReference>
<dbReference type="Gene3D" id="2.102.20.10">
    <property type="entry name" value="Beta-galactosidase, domain 2"/>
    <property type="match status" value="1"/>
</dbReference>
<dbReference type="Gene3D" id="2.60.390.10">
    <property type="entry name" value="Beta-galactosidase, domain 3"/>
    <property type="match status" value="1"/>
</dbReference>
<dbReference type="Gene3D" id="2.60.120.260">
    <property type="entry name" value="Galactose-binding domain-like"/>
    <property type="match status" value="3"/>
</dbReference>
<dbReference type="Gene3D" id="3.20.20.80">
    <property type="entry name" value="Glycosidases"/>
    <property type="match status" value="1"/>
</dbReference>
<dbReference type="InterPro" id="IPR018954">
    <property type="entry name" value="Betagal_dom2"/>
</dbReference>
<dbReference type="InterPro" id="IPR037110">
    <property type="entry name" value="Betagal_dom2_sf"/>
</dbReference>
<dbReference type="InterPro" id="IPR025972">
    <property type="entry name" value="BetaGal_dom3"/>
</dbReference>
<dbReference type="InterPro" id="IPR036833">
    <property type="entry name" value="BetaGal_dom3_sf"/>
</dbReference>
<dbReference type="InterPro" id="IPR025300">
    <property type="entry name" value="BetaGal_jelly_roll_dom"/>
</dbReference>
<dbReference type="InterPro" id="IPR008979">
    <property type="entry name" value="Galactose-bd-like_sf"/>
</dbReference>
<dbReference type="InterPro" id="IPR031330">
    <property type="entry name" value="Gly_Hdrlase_35_cat"/>
</dbReference>
<dbReference type="InterPro" id="IPR019801">
    <property type="entry name" value="Glyco_hydro_35_CS"/>
</dbReference>
<dbReference type="InterPro" id="IPR001944">
    <property type="entry name" value="Glycoside_Hdrlase_35"/>
</dbReference>
<dbReference type="InterPro" id="IPR017853">
    <property type="entry name" value="Glycoside_hydrolase_SF"/>
</dbReference>
<dbReference type="PANTHER" id="PTHR23421">
    <property type="entry name" value="BETA-GALACTOSIDASE RELATED"/>
    <property type="match status" value="1"/>
</dbReference>
<dbReference type="Pfam" id="PF13364">
    <property type="entry name" value="BetaGal_ABD2"/>
    <property type="match status" value="1"/>
</dbReference>
<dbReference type="Pfam" id="PF10435">
    <property type="entry name" value="BetaGal_dom2"/>
    <property type="match status" value="1"/>
</dbReference>
<dbReference type="Pfam" id="PF13363">
    <property type="entry name" value="BetaGal_dom3"/>
    <property type="match status" value="1"/>
</dbReference>
<dbReference type="Pfam" id="PF01301">
    <property type="entry name" value="Glyco_hydro_35"/>
    <property type="match status" value="1"/>
</dbReference>
<dbReference type="PRINTS" id="PR00742">
    <property type="entry name" value="GLHYDRLASE35"/>
</dbReference>
<dbReference type="SMART" id="SM01029">
    <property type="entry name" value="BetaGal_dom2"/>
    <property type="match status" value="1"/>
</dbReference>
<dbReference type="SUPFAM" id="SSF51445">
    <property type="entry name" value="(Trans)glycosidases"/>
    <property type="match status" value="1"/>
</dbReference>
<dbReference type="SUPFAM" id="SSF117100">
    <property type="entry name" value="Beta-galactosidase LacA, domain 3"/>
    <property type="match status" value="1"/>
</dbReference>
<dbReference type="SUPFAM" id="SSF49785">
    <property type="entry name" value="Galactose-binding domain-like"/>
    <property type="match status" value="2"/>
</dbReference>
<dbReference type="SUPFAM" id="SSF51011">
    <property type="entry name" value="Glycosyl hydrolase domain"/>
    <property type="match status" value="1"/>
</dbReference>
<dbReference type="PROSITE" id="PS01182">
    <property type="entry name" value="GLYCOSYL_HYDROL_F35"/>
    <property type="match status" value="1"/>
</dbReference>
<protein>
    <recommendedName>
        <fullName>Beta-galactosidase</fullName>
        <ecNumber>3.2.1.23</ecNumber>
    </recommendedName>
    <alternativeName>
        <fullName>Lactase-N</fullName>
        <shortName>Lactase</shortName>
    </alternativeName>
    <innName>Tilactase</innName>
</protein>
<name>BGAL_ASPNG</name>